<sequence length="147" mass="16026">MGGYEDIEGFHYGQEITFAADGRPALGYVSHTWWADEPRDGREPGSPLATETGFWRVQPGEDGGSVVEVTLAHPFGIAEIYVGTVTGTRVDLDHNVLIRTATARDVTRSVRLYGIVEGGDLAYAIDMEAEGKPLQSHLSARLHRVTD</sequence>
<accession>Q0RS51</accession>
<evidence type="ECO:0000255" key="1">
    <source>
        <dbReference type="HAMAP-Rule" id="MF_01297"/>
    </source>
</evidence>
<dbReference type="EC" id="5.99.-.-" evidence="1"/>
<dbReference type="EMBL" id="CT573213">
    <property type="protein sequence ID" value="CAJ59614.1"/>
    <property type="molecule type" value="Genomic_DNA"/>
</dbReference>
<dbReference type="SMR" id="Q0RS51"/>
<dbReference type="STRING" id="326424.FRAAL0948"/>
<dbReference type="KEGG" id="fal:FRAAL0948"/>
<dbReference type="eggNOG" id="COG4044">
    <property type="taxonomic scope" value="Bacteria"/>
</dbReference>
<dbReference type="HOGENOM" id="CLU_085483_0_0_11"/>
<dbReference type="Proteomes" id="UP000000657">
    <property type="component" value="Chromosome"/>
</dbReference>
<dbReference type="GO" id="GO:0016853">
    <property type="term" value="F:isomerase activity"/>
    <property type="evidence" value="ECO:0007669"/>
    <property type="project" value="UniProtKB-KW"/>
</dbReference>
<dbReference type="GO" id="GO:0046872">
    <property type="term" value="F:metal ion binding"/>
    <property type="evidence" value="ECO:0007669"/>
    <property type="project" value="UniProtKB-KW"/>
</dbReference>
<dbReference type="CDD" id="cd07828">
    <property type="entry name" value="lipocalin_heme-bd-THAP4-like"/>
    <property type="match status" value="1"/>
</dbReference>
<dbReference type="Gene3D" id="2.40.128.20">
    <property type="match status" value="1"/>
</dbReference>
<dbReference type="InterPro" id="IPR012674">
    <property type="entry name" value="Calycin"/>
</dbReference>
<dbReference type="InterPro" id="IPR045165">
    <property type="entry name" value="Nitrobindin"/>
</dbReference>
<dbReference type="InterPro" id="IPR014878">
    <property type="entry name" value="THAP4-like_heme-bd"/>
</dbReference>
<dbReference type="PANTHER" id="PTHR15854:SF4">
    <property type="entry name" value="PEROXYNITRITE ISOMERASE THAP4"/>
    <property type="match status" value="1"/>
</dbReference>
<dbReference type="PANTHER" id="PTHR15854">
    <property type="entry name" value="THAP4 PROTEIN"/>
    <property type="match status" value="1"/>
</dbReference>
<dbReference type="Pfam" id="PF08768">
    <property type="entry name" value="THAP4_heme-bd"/>
    <property type="match status" value="1"/>
</dbReference>
<dbReference type="SUPFAM" id="SSF50814">
    <property type="entry name" value="Lipocalins"/>
    <property type="match status" value="1"/>
</dbReference>
<feature type="chain" id="PRO_0000356905" description="Peroxynitrite isomerase">
    <location>
        <begin position="1"/>
        <end position="147"/>
    </location>
</feature>
<feature type="binding site" description="axial binding residue" evidence="1">
    <location>
        <position position="137"/>
    </location>
    <ligand>
        <name>heme b</name>
        <dbReference type="ChEBI" id="CHEBI:60344"/>
    </ligand>
    <ligandPart>
        <name>Fe</name>
        <dbReference type="ChEBI" id="CHEBI:18248"/>
    </ligandPart>
</feature>
<comment type="function">
    <text evidence="1">Heme-binding protein able to scavenge peroxynitrite and to protect free L-tyrosine against peroxynitrite-mediated nitration, by acting as a peroxynitrite isomerase that converts peroxynitrite to nitrate. Therefore, this protein likely plays a role in peroxynitrite sensing and in the detoxification of reactive nitrogen and oxygen species (RNS and ROS, respectively). Is able to bind nitric oxide (NO) in vitro, but may act as a sensor of peroxynitrite levels in vivo.</text>
</comment>
<comment type="catalytic activity">
    <reaction evidence="1">
        <text>peroxynitrite = nitrate</text>
        <dbReference type="Rhea" id="RHEA:63116"/>
        <dbReference type="ChEBI" id="CHEBI:17632"/>
        <dbReference type="ChEBI" id="CHEBI:25941"/>
    </reaction>
    <physiologicalReaction direction="left-to-right" evidence="1">
        <dbReference type="Rhea" id="RHEA:63117"/>
    </physiologicalReaction>
</comment>
<comment type="cofactor">
    <cofactor evidence="1">
        <name>heme b</name>
        <dbReference type="ChEBI" id="CHEBI:60344"/>
    </cofactor>
    <text evidence="1">Binds 1 heme b group per subunit, that coordinates a highly solvent-exposed Fe(III) atom.</text>
</comment>
<comment type="pathway">
    <text evidence="1">Nitrogen metabolism.</text>
</comment>
<comment type="subunit">
    <text evidence="1">Homodimer.</text>
</comment>
<comment type="domain">
    <text evidence="1">Forms a 10-stranded antiparallel beta-barrel structure able to accommodate a hydrophobic ligand in its interior. In fact, this fold hosts the heme group, which is located in a wide surface cleft.</text>
</comment>
<comment type="similarity">
    <text evidence="1">Belongs to the nitrobindin family.</text>
</comment>
<gene>
    <name type="ordered locus">FRAAL0948</name>
</gene>
<name>NB_FRAAA</name>
<organism>
    <name type="scientific">Frankia alni (strain DSM 45986 / CECT 9034 / ACN14a)</name>
    <dbReference type="NCBI Taxonomy" id="326424"/>
    <lineage>
        <taxon>Bacteria</taxon>
        <taxon>Bacillati</taxon>
        <taxon>Actinomycetota</taxon>
        <taxon>Actinomycetes</taxon>
        <taxon>Frankiales</taxon>
        <taxon>Frankiaceae</taxon>
        <taxon>Frankia</taxon>
    </lineage>
</organism>
<reference key="1">
    <citation type="journal article" date="2007" name="Genome Res.">
        <title>Genome characteristics of facultatively symbiotic Frankia sp. strains reflect host range and host plant biogeography.</title>
        <authorList>
            <person name="Normand P."/>
            <person name="Lapierre P."/>
            <person name="Tisa L.S."/>
            <person name="Gogarten J.P."/>
            <person name="Alloisio N."/>
            <person name="Bagnarol E."/>
            <person name="Bassi C.A."/>
            <person name="Berry A.M."/>
            <person name="Bickhart D.M."/>
            <person name="Choisne N."/>
            <person name="Couloux A."/>
            <person name="Cournoyer B."/>
            <person name="Cruveiller S."/>
            <person name="Daubin V."/>
            <person name="Demange N."/>
            <person name="Francino M.P."/>
            <person name="Goltsman E."/>
            <person name="Huang Y."/>
            <person name="Kopp O.R."/>
            <person name="Labarre L."/>
            <person name="Lapidus A."/>
            <person name="Lavire C."/>
            <person name="Marechal J."/>
            <person name="Martinez M."/>
            <person name="Mastronunzio J.E."/>
            <person name="Mullin B.C."/>
            <person name="Niemann J."/>
            <person name="Pujic P."/>
            <person name="Rawnsley T."/>
            <person name="Rouy Z."/>
            <person name="Schenowitz C."/>
            <person name="Sellstedt A."/>
            <person name="Tavares F."/>
            <person name="Tomkins J.P."/>
            <person name="Vallenet D."/>
            <person name="Valverde C."/>
            <person name="Wall L.G."/>
            <person name="Wang Y."/>
            <person name="Medigue C."/>
            <person name="Benson D.R."/>
        </authorList>
    </citation>
    <scope>NUCLEOTIDE SEQUENCE [LARGE SCALE GENOMIC DNA]</scope>
    <source>
        <strain>DSM 45986 / CECT 9034 / ACN14a</strain>
    </source>
</reference>
<proteinExistence type="inferred from homology"/>
<keyword id="KW-0349">Heme</keyword>
<keyword id="KW-0408">Iron</keyword>
<keyword id="KW-0413">Isomerase</keyword>
<keyword id="KW-0479">Metal-binding</keyword>
<keyword id="KW-1185">Reference proteome</keyword>
<protein>
    <recommendedName>
        <fullName>Peroxynitrite isomerase</fullName>
        <ecNumber evidence="1">5.99.-.-</ecNumber>
    </recommendedName>
    <alternativeName>
        <fullName>Ferric nitrobindin</fullName>
        <shortName>Nb(III)</shortName>
    </alternativeName>
</protein>